<proteinExistence type="inferred from homology"/>
<dbReference type="EMBL" id="X63763">
    <property type="protein sequence ID" value="CAA45296.1"/>
    <property type="molecule type" value="Genomic_DNA"/>
</dbReference>
<dbReference type="SMR" id="P25902"/>
<dbReference type="GO" id="GO:0009538">
    <property type="term" value="C:photosystem I reaction center"/>
    <property type="evidence" value="ECO:0007669"/>
    <property type="project" value="InterPro"/>
</dbReference>
<dbReference type="GO" id="GO:0031676">
    <property type="term" value="C:plasma membrane-derived thylakoid membrane"/>
    <property type="evidence" value="ECO:0007669"/>
    <property type="project" value="UniProtKB-SubCell"/>
</dbReference>
<dbReference type="GO" id="GO:0015979">
    <property type="term" value="P:photosynthesis"/>
    <property type="evidence" value="ECO:0007669"/>
    <property type="project" value="UniProtKB-UniRule"/>
</dbReference>
<dbReference type="Gene3D" id="1.20.1240.10">
    <property type="entry name" value="Photosystem I PsaL, reaction centre subunit XI"/>
    <property type="match status" value="1"/>
</dbReference>
<dbReference type="HAMAP" id="MF_00447">
    <property type="entry name" value="PSI_PsaL"/>
    <property type="match status" value="1"/>
</dbReference>
<dbReference type="InterPro" id="IPR003757">
    <property type="entry name" value="PSI_PsaL"/>
</dbReference>
<dbReference type="InterPro" id="IPR036592">
    <property type="entry name" value="PSI_PsaL_sf"/>
</dbReference>
<dbReference type="InterPro" id="IPR022980">
    <property type="entry name" value="PSI_suXI"/>
</dbReference>
<dbReference type="NCBIfam" id="NF001926">
    <property type="entry name" value="PRK00704.1-3"/>
    <property type="match status" value="1"/>
</dbReference>
<dbReference type="PANTHER" id="PTHR34803">
    <property type="entry name" value="PHOTOSYSTEM I REACTION CENTER SUBUNIT XI, CHLOROPLASTIC"/>
    <property type="match status" value="1"/>
</dbReference>
<dbReference type="PANTHER" id="PTHR34803:SF2">
    <property type="entry name" value="PHOTOSYSTEM I REACTION CENTER SUBUNIT XI, CHLOROPLASTIC"/>
    <property type="match status" value="1"/>
</dbReference>
<dbReference type="Pfam" id="PF02605">
    <property type="entry name" value="PsaL"/>
    <property type="match status" value="1"/>
</dbReference>
<dbReference type="SUPFAM" id="SSF81568">
    <property type="entry name" value="Photosystem I reaction center subunit XI, PsaL"/>
    <property type="match status" value="1"/>
</dbReference>
<gene>
    <name type="primary">psaL</name>
</gene>
<protein>
    <recommendedName>
        <fullName>Photosystem I reaction center subunit XI</fullName>
    </recommendedName>
    <alternativeName>
        <fullName>PSI subunit V</fullName>
    </alternativeName>
    <alternativeName>
        <fullName>PSI-L</fullName>
    </alternativeName>
</protein>
<reference key="1">
    <citation type="journal article" date="1993" name="Gene">
        <title>Genes encoding eleven subunits of photosystem I from the thermophilic cyanobacterium Synechococcus sp.</title>
        <authorList>
            <person name="Muehlenhoff U."/>
            <person name="Haehnel W."/>
            <person name="Witt H.T."/>
            <person name="Herrmann R.G."/>
        </authorList>
    </citation>
    <scope>NUCLEOTIDE SEQUENCE [GENOMIC DNA]</scope>
</reference>
<evidence type="ECO:0000250" key="1"/>
<evidence type="ECO:0000255" key="2"/>
<evidence type="ECO:0000305" key="3"/>
<keyword id="KW-0472">Membrane</keyword>
<keyword id="KW-0602">Photosynthesis</keyword>
<keyword id="KW-0603">Photosystem I</keyword>
<keyword id="KW-0793">Thylakoid</keyword>
<keyword id="KW-0812">Transmembrane</keyword>
<keyword id="KW-1133">Transmembrane helix</keyword>
<comment type="subcellular location">
    <subcellularLocation>
        <location evidence="1">Cellular thylakoid membrane</location>
        <topology evidence="1">Multi-pass membrane protein</topology>
    </subcellularLocation>
</comment>
<comment type="similarity">
    <text evidence="3">Belongs to the PsaL family.</text>
</comment>
<sequence length="149" mass="15561">MAEELVKPYNGDPFVGHLSTPISDSGLVKTFIGNLPAYRQGLSPILPGLEVGMAHGYFLIGPWVKLGPLRDSDVANLGGLISGIALILVATACLAAYGLVSFQKGGSSSDPLKTSEGWSQFTAGFFVGAMGSAFVAFFLLENFLLSMAS</sequence>
<accession>P25902</accession>
<organism>
    <name type="scientific">Synechococcus elongatus</name>
    <dbReference type="NCBI Taxonomy" id="32046"/>
    <lineage>
        <taxon>Bacteria</taxon>
        <taxon>Bacillati</taxon>
        <taxon>Cyanobacteriota</taxon>
        <taxon>Cyanophyceae</taxon>
        <taxon>Synechococcales</taxon>
        <taxon>Synechococcaceae</taxon>
        <taxon>Synechococcus</taxon>
    </lineage>
</organism>
<feature type="initiator methionine" description="Removed" evidence="1">
    <location>
        <position position="1"/>
    </location>
</feature>
<feature type="chain" id="PRO_0000194699" description="Photosystem I reaction center subunit XI">
    <location>
        <begin position="2"/>
        <end position="149"/>
    </location>
</feature>
<feature type="transmembrane region" description="Helical" evidence="2">
    <location>
        <begin position="80"/>
        <end position="100"/>
    </location>
</feature>
<feature type="transmembrane region" description="Helical" evidence="2">
    <location>
        <begin position="125"/>
        <end position="145"/>
    </location>
</feature>
<name>PSAL_SYNEL</name>